<proteinExistence type="evidence at transcript level"/>
<comment type="function">
    <text evidence="2">Catalyzes the stereospecific oxidation of squalene to (S)-2,3-epoxysqualene, and is considered to be a rate-limiting enzyme in steroid biosynthesis.</text>
</comment>
<comment type="catalytic activity">
    <reaction evidence="2">
        <text>squalene + reduced [NADPH--hemoprotein reductase] + O2 = (S)-2,3-epoxysqualene + oxidized [NADPH--hemoprotein reductase] + H2O + H(+)</text>
        <dbReference type="Rhea" id="RHEA:25282"/>
        <dbReference type="Rhea" id="RHEA-COMP:11964"/>
        <dbReference type="Rhea" id="RHEA-COMP:11965"/>
        <dbReference type="ChEBI" id="CHEBI:15377"/>
        <dbReference type="ChEBI" id="CHEBI:15378"/>
        <dbReference type="ChEBI" id="CHEBI:15379"/>
        <dbReference type="ChEBI" id="CHEBI:15440"/>
        <dbReference type="ChEBI" id="CHEBI:15441"/>
        <dbReference type="ChEBI" id="CHEBI:57618"/>
        <dbReference type="ChEBI" id="CHEBI:58210"/>
        <dbReference type="EC" id="1.14.14.17"/>
    </reaction>
</comment>
<comment type="cofactor">
    <cofactor evidence="1">
        <name>FAD</name>
        <dbReference type="ChEBI" id="CHEBI:57692"/>
    </cofactor>
</comment>
<comment type="pathway">
    <text>Terpene metabolism; lanosterol biosynthesis; lanosterol from farnesyl diphosphate: step 2/3.</text>
</comment>
<comment type="subcellular location">
    <subcellularLocation>
        <location evidence="5">Membrane</location>
        <topology evidence="5">Multi-pass membrane protein</topology>
    </subcellularLocation>
</comment>
<comment type="tissue specificity">
    <text evidence="4">Expressed in seedlings, leaves, stems, inflorescences and siliques.</text>
</comment>
<comment type="similarity">
    <text evidence="5">Belongs to the squalene monooxygenase family.</text>
</comment>
<organism>
    <name type="scientific">Arabidopsis thaliana</name>
    <name type="common">Mouse-ear cress</name>
    <dbReference type="NCBI Taxonomy" id="3702"/>
    <lineage>
        <taxon>Eukaryota</taxon>
        <taxon>Viridiplantae</taxon>
        <taxon>Streptophyta</taxon>
        <taxon>Embryophyta</taxon>
        <taxon>Tracheophyta</taxon>
        <taxon>Spermatophyta</taxon>
        <taxon>Magnoliopsida</taxon>
        <taxon>eudicotyledons</taxon>
        <taxon>Gunneridae</taxon>
        <taxon>Pentapetalae</taxon>
        <taxon>rosids</taxon>
        <taxon>malvids</taxon>
        <taxon>Brassicales</taxon>
        <taxon>Brassicaceae</taxon>
        <taxon>Camelineae</taxon>
        <taxon>Arabidopsis</taxon>
    </lineage>
</organism>
<feature type="chain" id="PRO_0000209842" description="Squalene epoxidase 6">
    <location>
        <begin position="1"/>
        <end position="517"/>
    </location>
</feature>
<feature type="transmembrane region" description="Helical" evidence="3">
    <location>
        <begin position="3"/>
        <end position="23"/>
    </location>
</feature>
<feature type="transmembrane region" description="Helical" evidence="3">
    <location>
        <begin position="45"/>
        <end position="65"/>
    </location>
</feature>
<feature type="transmembrane region" description="Helical" evidence="3">
    <location>
        <begin position="447"/>
        <end position="467"/>
    </location>
</feature>
<feature type="binding site" evidence="1">
    <location>
        <begin position="55"/>
        <end position="56"/>
    </location>
    <ligand>
        <name>FAD</name>
        <dbReference type="ChEBI" id="CHEBI:57692"/>
    </ligand>
</feature>
<feature type="binding site" evidence="1">
    <location>
        <begin position="75"/>
        <end position="76"/>
    </location>
    <ligand>
        <name>FAD</name>
        <dbReference type="ChEBI" id="CHEBI:57692"/>
    </ligand>
</feature>
<feature type="binding site" evidence="1">
    <location>
        <position position="83"/>
    </location>
    <ligand>
        <name>FAD</name>
        <dbReference type="ChEBI" id="CHEBI:57692"/>
    </ligand>
</feature>
<feature type="binding site" evidence="1">
    <location>
        <position position="88"/>
    </location>
    <ligand>
        <name>FAD</name>
        <dbReference type="ChEBI" id="CHEBI:57692"/>
    </ligand>
</feature>
<feature type="binding site" evidence="1">
    <location>
        <position position="156"/>
    </location>
    <ligand>
        <name>FAD</name>
        <dbReference type="ChEBI" id="CHEBI:57692"/>
    </ligand>
</feature>
<feature type="binding site" evidence="1">
    <location>
        <position position="172"/>
    </location>
    <ligand>
        <name>FAD</name>
        <dbReference type="ChEBI" id="CHEBI:57692"/>
    </ligand>
</feature>
<feature type="binding site" evidence="1">
    <location>
        <position position="336"/>
    </location>
    <ligand>
        <name>FAD</name>
        <dbReference type="ChEBI" id="CHEBI:57692"/>
    </ligand>
</feature>
<feature type="binding site" evidence="1">
    <location>
        <position position="349"/>
    </location>
    <ligand>
        <name>FAD</name>
        <dbReference type="ChEBI" id="CHEBI:57692"/>
    </ligand>
</feature>
<reference key="1">
    <citation type="journal article" date="1999" name="Plant Mol. Biol.">
        <title>An example of intron junctional sliding in the gene families encoding squalene monooxygenase homologues in Arabidopsis thaliana and Brassica napus.</title>
        <authorList>
            <person name="Schafer U.A."/>
            <person name="Reed D.W."/>
            <person name="Hunter D.G."/>
            <person name="Yao K."/>
            <person name="Weninger A.M."/>
            <person name="Tsang E.W.T."/>
            <person name="Reaney M.J.T."/>
            <person name="MacKenzie S.L."/>
            <person name="Covello P.S."/>
        </authorList>
    </citation>
    <scope>NUCLEOTIDE SEQUENCE [MRNA]</scope>
    <source>
        <strain>cv. Columbia</strain>
    </source>
</reference>
<reference key="2">
    <citation type="journal article" date="1998" name="DNA Res.">
        <title>Structural analysis of Arabidopsis thaliana chromosome 5. VIII. Sequence features of the regions of 1,081,958 bp covered by seventeen physically assigned P1 and TAC clones.</title>
        <authorList>
            <person name="Asamizu E."/>
            <person name="Sato S."/>
            <person name="Kaneko T."/>
            <person name="Nakamura Y."/>
            <person name="Kotani H."/>
            <person name="Miyajima N."/>
            <person name="Tabata S."/>
        </authorList>
    </citation>
    <scope>NUCLEOTIDE SEQUENCE [LARGE SCALE GENOMIC DNA]</scope>
    <source>
        <strain>cv. Columbia</strain>
    </source>
</reference>
<reference key="3">
    <citation type="journal article" date="2017" name="Plant J.">
        <title>Araport11: a complete reannotation of the Arabidopsis thaliana reference genome.</title>
        <authorList>
            <person name="Cheng C.Y."/>
            <person name="Krishnakumar V."/>
            <person name="Chan A.P."/>
            <person name="Thibaud-Nissen F."/>
            <person name="Schobel S."/>
            <person name="Town C.D."/>
        </authorList>
    </citation>
    <scope>GENOME REANNOTATION</scope>
    <source>
        <strain>cv. Columbia</strain>
    </source>
</reference>
<reference key="4">
    <citation type="journal article" date="2007" name="J. Biol. Chem.">
        <title>Arabidopsis thaliana squalene epoxidase 1 is essential for root and seed development.</title>
        <authorList>
            <person name="Rasbery J.M."/>
            <person name="Shan H."/>
            <person name="LeClair R.J."/>
            <person name="Norman M."/>
            <person name="Matsuda S.P."/>
            <person name="Bartel B."/>
        </authorList>
    </citation>
    <scope>IDENTIFICATION</scope>
    <scope>TISSUE SPECIFICITY</scope>
    <scope>GENE FAMILY</scope>
    <scope>NOMENCLATURE</scope>
</reference>
<evidence type="ECO:0000250" key="1">
    <source>
        <dbReference type="UniProtKB" id="Q14534"/>
    </source>
</evidence>
<evidence type="ECO:0000250" key="2">
    <source>
        <dbReference type="UniProtKB" id="Q9SM02"/>
    </source>
</evidence>
<evidence type="ECO:0000255" key="3"/>
<evidence type="ECO:0000269" key="4">
    <source>
    </source>
</evidence>
<evidence type="ECO:0000305" key="5"/>
<name>ERG12_ARATH</name>
<accession>O65402</accession>
<sequence>MAFTHVCLWTLVAFVLTWTVFYLTNMKKKATDLADTVAEDQKDGAADVIIVGAGVGGSALAYALAKDGRRVHVIERDMREPERMMGEFMQPGGRLMLSKLGLQDCLEDIDAQKATGLAVYKDGKEADAPFPVDNNNFSYEPSARSFHNGRFVQQLRRKAFSLSNVRLEEGTVKSLLEEKGVVKGVTYKNKEGEETTALAPLTVVCDGCYSNLRRSLNDDNNAEIMSYIVGYISKNCRLEEPEKLHLILSKPSFTMVYQISSTDVRCGFEVLPENFPSIANGEMSTFMKNTIVPQVPPKLRKIFLKGIDEGAHIKVVPAKRMTSTLSKKKGVIVLGDAFNMRHPVVASGMMVLLSDILILRRLLQPLSNLGDANKVSEVINSFYDIRKPMSATVNTLGNAFSQVLIGSTDEAKEAMRQGVYDYLCSGGFRTSGMMALLGGMNPRPLSLVYHLCAITLSSIGQLLSPFPSPLRIWHSLKLFGLAMKMLVPNLKAEGVSQMLFPANAAAYHKSYMAATTL</sequence>
<keyword id="KW-0274">FAD</keyword>
<keyword id="KW-0285">Flavoprotein</keyword>
<keyword id="KW-0472">Membrane</keyword>
<keyword id="KW-0560">Oxidoreductase</keyword>
<keyword id="KW-1185">Reference proteome</keyword>
<keyword id="KW-0812">Transmembrane</keyword>
<keyword id="KW-1133">Transmembrane helix</keyword>
<protein>
    <recommendedName>
        <fullName>Squalene epoxidase 6</fullName>
        <shortName>AtSQE6</shortName>
        <ecNumber evidence="2">1.14.14.17</ecNumber>
    </recommendedName>
    <alternativeName>
        <fullName>Squalene monooxygenase 1,2</fullName>
        <shortName>SE 1,2</shortName>
    </alternativeName>
</protein>
<gene>
    <name type="primary">SQE6</name>
    <name type="synonym">SQP1,2</name>
    <name type="ordered locus">At5g24160</name>
    <name type="ORF">K12G2.4</name>
</gene>
<dbReference type="EC" id="1.14.14.17" evidence="2"/>
<dbReference type="EMBL" id="AJ005927">
    <property type="protein sequence ID" value="CAA06769.1"/>
    <property type="molecule type" value="mRNA"/>
</dbReference>
<dbReference type="EMBL" id="AB016883">
    <property type="protein sequence ID" value="BAB08407.1"/>
    <property type="molecule type" value="Genomic_DNA"/>
</dbReference>
<dbReference type="EMBL" id="CP002688">
    <property type="protein sequence ID" value="AED93265.1"/>
    <property type="molecule type" value="Genomic_DNA"/>
</dbReference>
<dbReference type="PIR" id="T51363">
    <property type="entry name" value="T51363"/>
</dbReference>
<dbReference type="RefSeq" id="NP_197804.1">
    <property type="nucleotide sequence ID" value="NM_122321.5"/>
</dbReference>
<dbReference type="SMR" id="O65402"/>
<dbReference type="FunCoup" id="O65402">
    <property type="interactions" value="549"/>
</dbReference>
<dbReference type="STRING" id="3702.O65402"/>
<dbReference type="PaxDb" id="3702-AT5G24160.1"/>
<dbReference type="ProteomicsDB" id="220572"/>
<dbReference type="EnsemblPlants" id="AT5G24160.1">
    <property type="protein sequence ID" value="AT5G24160.1"/>
    <property type="gene ID" value="AT5G24160"/>
</dbReference>
<dbReference type="GeneID" id="832482"/>
<dbReference type="Gramene" id="AT5G24160.1">
    <property type="protein sequence ID" value="AT5G24160.1"/>
    <property type="gene ID" value="AT5G24160"/>
</dbReference>
<dbReference type="KEGG" id="ath:AT5G24160"/>
<dbReference type="Araport" id="AT5G24160"/>
<dbReference type="TAIR" id="AT5G24160">
    <property type="gene designation" value="SQE6"/>
</dbReference>
<dbReference type="eggNOG" id="KOG1298">
    <property type="taxonomic scope" value="Eukaryota"/>
</dbReference>
<dbReference type="HOGENOM" id="CLU_026390_1_0_1"/>
<dbReference type="InParanoid" id="O65402"/>
<dbReference type="OMA" id="WTIFHVN"/>
<dbReference type="PhylomeDB" id="O65402"/>
<dbReference type="BioCyc" id="ARA:AT5G24160-MONOMER"/>
<dbReference type="UniPathway" id="UPA00767">
    <property type="reaction ID" value="UER00752"/>
</dbReference>
<dbReference type="PRO" id="PR:O65402"/>
<dbReference type="Proteomes" id="UP000006548">
    <property type="component" value="Chromosome 5"/>
</dbReference>
<dbReference type="ExpressionAtlas" id="O65402">
    <property type="expression patterns" value="baseline and differential"/>
</dbReference>
<dbReference type="GO" id="GO:0016020">
    <property type="term" value="C:membrane"/>
    <property type="evidence" value="ECO:0007669"/>
    <property type="project" value="UniProtKB-SubCell"/>
</dbReference>
<dbReference type="GO" id="GO:0050660">
    <property type="term" value="F:flavin adenine dinucleotide binding"/>
    <property type="evidence" value="ECO:0007669"/>
    <property type="project" value="InterPro"/>
</dbReference>
<dbReference type="GO" id="GO:0004506">
    <property type="term" value="F:squalene monooxygenase activity"/>
    <property type="evidence" value="ECO:0007669"/>
    <property type="project" value="UniProtKB-EC"/>
</dbReference>
<dbReference type="GO" id="GO:0016126">
    <property type="term" value="P:sterol biosynthetic process"/>
    <property type="evidence" value="ECO:0007669"/>
    <property type="project" value="InterPro"/>
</dbReference>
<dbReference type="FunFam" id="3.50.50.60:FF:000074">
    <property type="entry name" value="Squalene monooxygenase 2"/>
    <property type="match status" value="1"/>
</dbReference>
<dbReference type="Gene3D" id="3.50.50.60">
    <property type="entry name" value="FAD/NAD(P)-binding domain"/>
    <property type="match status" value="1"/>
</dbReference>
<dbReference type="InterPro" id="IPR006076">
    <property type="entry name" value="FAD-dep_OxRdtase"/>
</dbReference>
<dbReference type="InterPro" id="IPR036188">
    <property type="entry name" value="FAD/NAD-bd_sf"/>
</dbReference>
<dbReference type="InterPro" id="IPR013698">
    <property type="entry name" value="Squalene_epoxidase"/>
</dbReference>
<dbReference type="InterPro" id="IPR040125">
    <property type="entry name" value="Squalene_monox"/>
</dbReference>
<dbReference type="PANTHER" id="PTHR10835:SF22">
    <property type="entry name" value="SQUALENE EPOXIDASE 5-RELATED"/>
    <property type="match status" value="1"/>
</dbReference>
<dbReference type="PANTHER" id="PTHR10835">
    <property type="entry name" value="SQUALENE MONOOXYGENASE"/>
    <property type="match status" value="1"/>
</dbReference>
<dbReference type="Pfam" id="PF01266">
    <property type="entry name" value="DAO"/>
    <property type="match status" value="1"/>
</dbReference>
<dbReference type="Pfam" id="PF08491">
    <property type="entry name" value="SE"/>
    <property type="match status" value="1"/>
</dbReference>
<dbReference type="PRINTS" id="PR00420">
    <property type="entry name" value="RNGMNOXGNASE"/>
</dbReference>
<dbReference type="SUPFAM" id="SSF51905">
    <property type="entry name" value="FAD/NAD(P)-binding domain"/>
    <property type="match status" value="1"/>
</dbReference>